<comment type="function">
    <text>Binds directly to 23S rRNA, probably serving to organize its structure.</text>
</comment>
<comment type="subunit">
    <text evidence="1 2 3 4 5 6">Part of the 50S ribosomal subunit. Contacts proteins L13 and L21.</text>
</comment>
<comment type="similarity">
    <text evidence="7">Belongs to the bacterial ribosomal protein bL20 family.</text>
</comment>
<gene>
    <name type="primary">rplT</name>
    <name type="ordered locus">DR_2004</name>
</gene>
<dbReference type="EMBL" id="AE000513">
    <property type="protein sequence ID" value="AAF11553.1"/>
    <property type="molecule type" value="Genomic_DNA"/>
</dbReference>
<dbReference type="PIR" id="A75326">
    <property type="entry name" value="A75326"/>
</dbReference>
<dbReference type="RefSeq" id="NP_295727.1">
    <property type="nucleotide sequence ID" value="NC_001263.1"/>
</dbReference>
<dbReference type="RefSeq" id="WP_010888637.1">
    <property type="nucleotide sequence ID" value="NZ_JMLF01000018.1"/>
</dbReference>
<dbReference type="PDB" id="1NKW">
    <property type="method" value="X-ray"/>
    <property type="resolution" value="3.10 A"/>
    <property type="chains" value="O=1-118"/>
</dbReference>
<dbReference type="PDB" id="1NWX">
    <property type="method" value="X-ray"/>
    <property type="resolution" value="3.50 A"/>
    <property type="chains" value="O=1-118"/>
</dbReference>
<dbReference type="PDB" id="1NWY">
    <property type="method" value="X-ray"/>
    <property type="resolution" value="3.30 A"/>
    <property type="chains" value="O=1-118"/>
</dbReference>
<dbReference type="PDB" id="1SM1">
    <property type="method" value="X-ray"/>
    <property type="resolution" value="3.42 A"/>
    <property type="chains" value="O=1-118"/>
</dbReference>
<dbReference type="PDB" id="1XBP">
    <property type="method" value="X-ray"/>
    <property type="resolution" value="3.50 A"/>
    <property type="chains" value="O=1-118"/>
</dbReference>
<dbReference type="PDB" id="2ZJP">
    <property type="method" value="X-ray"/>
    <property type="resolution" value="3.70 A"/>
    <property type="chains" value="N=1-118"/>
</dbReference>
<dbReference type="PDB" id="2ZJQ">
    <property type="method" value="X-ray"/>
    <property type="resolution" value="3.30 A"/>
    <property type="chains" value="N=1-118"/>
</dbReference>
<dbReference type="PDB" id="2ZJR">
    <property type="method" value="X-ray"/>
    <property type="resolution" value="2.91 A"/>
    <property type="chains" value="N=1-118"/>
</dbReference>
<dbReference type="PDB" id="3CF5">
    <property type="method" value="X-ray"/>
    <property type="resolution" value="3.30 A"/>
    <property type="chains" value="N=1-118"/>
</dbReference>
<dbReference type="PDB" id="3DLL">
    <property type="method" value="X-ray"/>
    <property type="resolution" value="3.50 A"/>
    <property type="chains" value="N=1-118"/>
</dbReference>
<dbReference type="PDB" id="3PIO">
    <property type="method" value="X-ray"/>
    <property type="resolution" value="3.25 A"/>
    <property type="chains" value="N=1-118"/>
</dbReference>
<dbReference type="PDB" id="3PIP">
    <property type="method" value="X-ray"/>
    <property type="resolution" value="3.45 A"/>
    <property type="chains" value="N=1-118"/>
</dbReference>
<dbReference type="PDB" id="4IO9">
    <property type="method" value="X-ray"/>
    <property type="resolution" value="3.20 A"/>
    <property type="chains" value="N=1-118"/>
</dbReference>
<dbReference type="PDB" id="4IOA">
    <property type="method" value="X-ray"/>
    <property type="resolution" value="3.20 A"/>
    <property type="chains" value="N=1-118"/>
</dbReference>
<dbReference type="PDB" id="4IOC">
    <property type="method" value="X-ray"/>
    <property type="resolution" value="3.60 A"/>
    <property type="chains" value="N=1-118"/>
</dbReference>
<dbReference type="PDB" id="4U67">
    <property type="method" value="X-ray"/>
    <property type="resolution" value="3.65 A"/>
    <property type="chains" value="N=1-118"/>
</dbReference>
<dbReference type="PDB" id="4V49">
    <property type="method" value="X-ray"/>
    <property type="resolution" value="8.70 A"/>
    <property type="chains" value="O=2-118"/>
</dbReference>
<dbReference type="PDB" id="4V4A">
    <property type="method" value="X-ray"/>
    <property type="resolution" value="9.50 A"/>
    <property type="chains" value="O=2-118"/>
</dbReference>
<dbReference type="PDB" id="4V4G">
    <property type="method" value="X-ray"/>
    <property type="resolution" value="11.50 A"/>
    <property type="chains" value="R=2-118"/>
</dbReference>
<dbReference type="PDB" id="4V4R">
    <property type="method" value="X-ray"/>
    <property type="resolution" value="5.90 A"/>
    <property type="chains" value="BU=1-118"/>
</dbReference>
<dbReference type="PDB" id="4V4S">
    <property type="method" value="X-ray"/>
    <property type="resolution" value="6.76 A"/>
    <property type="chains" value="BU=1-118"/>
</dbReference>
<dbReference type="PDB" id="4V4T">
    <property type="method" value="X-ray"/>
    <property type="resolution" value="6.46 A"/>
    <property type="chains" value="U=1-118"/>
</dbReference>
<dbReference type="PDB" id="4WFN">
    <property type="method" value="X-ray"/>
    <property type="resolution" value="3.54 A"/>
    <property type="chains" value="N=1-118"/>
</dbReference>
<dbReference type="PDB" id="5DM6">
    <property type="method" value="X-ray"/>
    <property type="resolution" value="2.90 A"/>
    <property type="chains" value="N=2-118"/>
</dbReference>
<dbReference type="PDB" id="5DM7">
    <property type="method" value="X-ray"/>
    <property type="resolution" value="3.00 A"/>
    <property type="chains" value="N=2-118"/>
</dbReference>
<dbReference type="PDB" id="5JVG">
    <property type="method" value="X-ray"/>
    <property type="resolution" value="3.43 A"/>
    <property type="chains" value="N=1-118"/>
</dbReference>
<dbReference type="PDB" id="5JVH">
    <property type="method" value="X-ray"/>
    <property type="resolution" value="3.58 A"/>
    <property type="chains" value="N=1-118"/>
</dbReference>
<dbReference type="PDB" id="7A0R">
    <property type="method" value="X-ray"/>
    <property type="resolution" value="3.30 A"/>
    <property type="chains" value="N=2-118"/>
</dbReference>
<dbReference type="PDB" id="7A0S">
    <property type="method" value="X-ray"/>
    <property type="resolution" value="3.22 A"/>
    <property type="chains" value="N=2-118"/>
</dbReference>
<dbReference type="PDB" id="7A18">
    <property type="method" value="X-ray"/>
    <property type="resolution" value="3.40 A"/>
    <property type="chains" value="N=2-118"/>
</dbReference>
<dbReference type="PDBsum" id="1NKW"/>
<dbReference type="PDBsum" id="1NWX"/>
<dbReference type="PDBsum" id="1NWY"/>
<dbReference type="PDBsum" id="1SM1"/>
<dbReference type="PDBsum" id="1XBP"/>
<dbReference type="PDBsum" id="2ZJP"/>
<dbReference type="PDBsum" id="2ZJQ"/>
<dbReference type="PDBsum" id="2ZJR"/>
<dbReference type="PDBsum" id="3CF5"/>
<dbReference type="PDBsum" id="3DLL"/>
<dbReference type="PDBsum" id="3PIO"/>
<dbReference type="PDBsum" id="3PIP"/>
<dbReference type="PDBsum" id="4IO9"/>
<dbReference type="PDBsum" id="4IOA"/>
<dbReference type="PDBsum" id="4IOC"/>
<dbReference type="PDBsum" id="4U67"/>
<dbReference type="PDBsum" id="4V49"/>
<dbReference type="PDBsum" id="4V4A"/>
<dbReference type="PDBsum" id="4V4G"/>
<dbReference type="PDBsum" id="4V4R"/>
<dbReference type="PDBsum" id="4V4S"/>
<dbReference type="PDBsum" id="4V4T"/>
<dbReference type="PDBsum" id="4WFN"/>
<dbReference type="PDBsum" id="5DM6"/>
<dbReference type="PDBsum" id="5DM7"/>
<dbReference type="PDBsum" id="5JVG"/>
<dbReference type="PDBsum" id="5JVH"/>
<dbReference type="PDBsum" id="7A0R"/>
<dbReference type="PDBsum" id="7A0S"/>
<dbReference type="PDBsum" id="7A18"/>
<dbReference type="SMR" id="Q9RSW7"/>
<dbReference type="FunCoup" id="Q9RSW7">
    <property type="interactions" value="428"/>
</dbReference>
<dbReference type="IntAct" id="Q9RSW7">
    <property type="interactions" value="1"/>
</dbReference>
<dbReference type="STRING" id="243230.DR_2004"/>
<dbReference type="PaxDb" id="243230-DR_2004"/>
<dbReference type="EnsemblBacteria" id="AAF11553">
    <property type="protein sequence ID" value="AAF11553"/>
    <property type="gene ID" value="DR_2004"/>
</dbReference>
<dbReference type="GeneID" id="69518241"/>
<dbReference type="KEGG" id="dra:DR_2004"/>
<dbReference type="PATRIC" id="fig|243230.17.peg.2227"/>
<dbReference type="eggNOG" id="COG0292">
    <property type="taxonomic scope" value="Bacteria"/>
</dbReference>
<dbReference type="HOGENOM" id="CLU_123265_0_1_0"/>
<dbReference type="InParanoid" id="Q9RSW7"/>
<dbReference type="OrthoDB" id="9808966at2"/>
<dbReference type="EvolutionaryTrace" id="Q9RSW7"/>
<dbReference type="Proteomes" id="UP000002524">
    <property type="component" value="Chromosome 1"/>
</dbReference>
<dbReference type="GO" id="GO:0022625">
    <property type="term" value="C:cytosolic large ribosomal subunit"/>
    <property type="evidence" value="ECO:0000318"/>
    <property type="project" value="GO_Central"/>
</dbReference>
<dbReference type="GO" id="GO:0019843">
    <property type="term" value="F:rRNA binding"/>
    <property type="evidence" value="ECO:0007669"/>
    <property type="project" value="UniProtKB-UniRule"/>
</dbReference>
<dbReference type="GO" id="GO:0003735">
    <property type="term" value="F:structural constituent of ribosome"/>
    <property type="evidence" value="ECO:0000318"/>
    <property type="project" value="GO_Central"/>
</dbReference>
<dbReference type="GO" id="GO:0000027">
    <property type="term" value="P:ribosomal large subunit assembly"/>
    <property type="evidence" value="ECO:0007669"/>
    <property type="project" value="UniProtKB-UniRule"/>
</dbReference>
<dbReference type="GO" id="GO:0006412">
    <property type="term" value="P:translation"/>
    <property type="evidence" value="ECO:0007669"/>
    <property type="project" value="InterPro"/>
</dbReference>
<dbReference type="CDD" id="cd07026">
    <property type="entry name" value="Ribosomal_L20"/>
    <property type="match status" value="1"/>
</dbReference>
<dbReference type="FunFam" id="1.10.1900.20:FF:000001">
    <property type="entry name" value="50S ribosomal protein L20"/>
    <property type="match status" value="1"/>
</dbReference>
<dbReference type="Gene3D" id="6.10.160.10">
    <property type="match status" value="1"/>
</dbReference>
<dbReference type="Gene3D" id="1.10.1900.20">
    <property type="entry name" value="Ribosomal protein L20"/>
    <property type="match status" value="1"/>
</dbReference>
<dbReference type="HAMAP" id="MF_00382">
    <property type="entry name" value="Ribosomal_bL20"/>
    <property type="match status" value="1"/>
</dbReference>
<dbReference type="InterPro" id="IPR005813">
    <property type="entry name" value="Ribosomal_bL20"/>
</dbReference>
<dbReference type="InterPro" id="IPR049946">
    <property type="entry name" value="RIBOSOMAL_L20_CS"/>
</dbReference>
<dbReference type="InterPro" id="IPR035566">
    <property type="entry name" value="Ribosomal_protein_bL20_C"/>
</dbReference>
<dbReference type="NCBIfam" id="TIGR01032">
    <property type="entry name" value="rplT_bact"/>
    <property type="match status" value="1"/>
</dbReference>
<dbReference type="PANTHER" id="PTHR10986">
    <property type="entry name" value="39S RIBOSOMAL PROTEIN L20"/>
    <property type="match status" value="1"/>
</dbReference>
<dbReference type="Pfam" id="PF00453">
    <property type="entry name" value="Ribosomal_L20"/>
    <property type="match status" value="1"/>
</dbReference>
<dbReference type="PRINTS" id="PR00062">
    <property type="entry name" value="RIBOSOMALL20"/>
</dbReference>
<dbReference type="SUPFAM" id="SSF74731">
    <property type="entry name" value="Ribosomal protein L20"/>
    <property type="match status" value="1"/>
</dbReference>
<dbReference type="PROSITE" id="PS00937">
    <property type="entry name" value="RIBOSOMAL_L20"/>
    <property type="match status" value="1"/>
</dbReference>
<keyword id="KW-0002">3D-structure</keyword>
<keyword id="KW-0903">Direct protein sequencing</keyword>
<keyword id="KW-1185">Reference proteome</keyword>
<keyword id="KW-0687">Ribonucleoprotein</keyword>
<keyword id="KW-0689">Ribosomal protein</keyword>
<keyword id="KW-0694">RNA-binding</keyword>
<keyword id="KW-0699">rRNA-binding</keyword>
<reference key="1">
    <citation type="journal article" date="1999" name="Science">
        <title>Genome sequence of the radioresistant bacterium Deinococcus radiodurans R1.</title>
        <authorList>
            <person name="White O."/>
            <person name="Eisen J.A."/>
            <person name="Heidelberg J.F."/>
            <person name="Hickey E.K."/>
            <person name="Peterson J.D."/>
            <person name="Dodson R.J."/>
            <person name="Haft D.H."/>
            <person name="Gwinn M.L."/>
            <person name="Nelson W.C."/>
            <person name="Richardson D.L."/>
            <person name="Moffat K.S."/>
            <person name="Qin H."/>
            <person name="Jiang L."/>
            <person name="Pamphile W."/>
            <person name="Crosby M."/>
            <person name="Shen M."/>
            <person name="Vamathevan J.J."/>
            <person name="Lam P."/>
            <person name="McDonald L.A."/>
            <person name="Utterback T.R."/>
            <person name="Zalewski C."/>
            <person name="Makarova K.S."/>
            <person name="Aravind L."/>
            <person name="Daly M.J."/>
            <person name="Minton K.W."/>
            <person name="Fleischmann R.D."/>
            <person name="Ketchum K.A."/>
            <person name="Nelson K.E."/>
            <person name="Salzberg S.L."/>
            <person name="Smith H.O."/>
            <person name="Venter J.C."/>
            <person name="Fraser C.M."/>
        </authorList>
    </citation>
    <scope>NUCLEOTIDE SEQUENCE [LARGE SCALE GENOMIC DNA]</scope>
    <source>
        <strain>ATCC 13939 / DSM 20539 / JCM 16871 / CCUG 27074 / LMG 4051 / NBRC 15346 / NCIMB 9279 / VKM B-1422 / R1</strain>
    </source>
</reference>
<reference key="2">
    <citation type="journal article" date="2001" name="Cell">
        <title>High resolution structure of the large ribosomal subunit from a mesophilic eubacterium.</title>
        <authorList>
            <person name="Harms J."/>
            <person name="Schluenzen F."/>
            <person name="Zarivach R."/>
            <person name="Bashan A."/>
            <person name="Gat S."/>
            <person name="Agmon I."/>
            <person name="Bartels H."/>
            <person name="Franceschi F."/>
            <person name="Yonath A."/>
        </authorList>
    </citation>
    <scope>X-RAY CRYSTALLOGRAPHY (3.1 ANGSTROMS) OF THE 50S SUBUNIT</scope>
    <scope>PROTEIN SEQUENCE OF 1-5</scope>
    <source>
        <strain>ATCC 13939 / DSM 20539 / JCM 16871 / CCUG 27074 / LMG 4051 / NBRC 15346 / NCIMB 9279 / VKM B-1422 / R1</strain>
    </source>
</reference>
<reference key="3">
    <citation type="journal article" date="2001" name="Nature">
        <title>Structural basis for the interaction of antibiotics with the peptidyl transferase centre in eubacteria.</title>
        <authorList>
            <person name="Schluenzen F."/>
            <person name="Zarivach R."/>
            <person name="Harms J."/>
            <person name="Bashan A."/>
            <person name="Tocilj A."/>
            <person name="Albrecht R."/>
            <person name="Yonath A."/>
            <person name="Franceschi F."/>
        </authorList>
    </citation>
    <scope>X-RAY CRYSTALLOGRAPHY (3.1 ANGSTROMS) OF THE 50S SUBUNIT IN COMPLEX WITH FIVE ANTIBIOTICS</scope>
    <source>
        <strain>ATCC 13939 / DSM 20539 / JCM 16871 / CCUG 27074 / LMG 4051 / NBRC 15346 / NCIMB 9279 / VKM B-1422 / R1</strain>
    </source>
</reference>
<reference key="4">
    <citation type="journal article" date="2003" name="Mol. Cell">
        <title>Structural basis of the ribosomal machinery for peptide bond formation, translocation, and nascent chain progression.</title>
        <authorList>
            <person name="Bashan A."/>
            <person name="Agmon I."/>
            <person name="Zarivach R."/>
            <person name="Schluenzen F."/>
            <person name="Harms J."/>
            <person name="Berisio R."/>
            <person name="Bartels H."/>
            <person name="Franceschi F."/>
            <person name="Auerbach T."/>
            <person name="Hansen H.A."/>
            <person name="Kossoy E."/>
            <person name="Kessler M."/>
            <person name="Yonath A."/>
        </authorList>
    </citation>
    <scope>X-RAY CRYSTALLOGRAPHY (3.5 ANGSTROMS) OF THE 50S SUBUNIT IN COMPLEX WITH TRNA MIMICS</scope>
    <source>
        <strain>ATCC 13939 / DSM 20539 / JCM 16871 / CCUG 27074 / LMG 4051 / NBRC 15346 / NCIMB 9279 / VKM B-1422 / R1</strain>
    </source>
</reference>
<reference key="5">
    <citation type="journal article" date="2003" name="Structure">
        <title>Structural basis for the antibiotic activity of ketolides and azalides.</title>
        <authorList>
            <person name="Schluenzen F."/>
            <person name="Harms J.M."/>
            <person name="Franceschi F."/>
            <person name="Hansen H.A."/>
            <person name="Bartels H."/>
            <person name="Zarivach R."/>
            <person name="Yonath A."/>
        </authorList>
    </citation>
    <scope>X-RAY CRYSTALLOGRAPHY (3.3 ANGSTROMS) OF THE 50S SUBUNIT IN COMPLEX WITH MODIFIED MACROLIDE ANTIBIOTICS</scope>
    <source>
        <strain>ATCC 13939 / DSM 20539 / JCM 16871 / CCUG 27074 / LMG 4051 / NBRC 15346 / NCIMB 9279 / VKM B-1422 / R1</strain>
    </source>
</reference>
<reference key="6">
    <citation type="journal article" date="2003" name="Nat. Struct. Biol.">
        <title>Structural insight into the role of the ribosomal tunnel in cellular regulation.</title>
        <authorList>
            <person name="Berisio R."/>
            <person name="Schluenzen F."/>
            <person name="Harms J."/>
            <person name="Bashan A."/>
            <person name="Auerbach T."/>
            <person name="Baram D."/>
            <person name="Yonath A."/>
        </authorList>
    </citation>
    <scope>X-RAY CRYSTALLOGRAPHY (3.4 ANGSTROMS) OF THE 50S SUBUNIT IN COMPLEX WITH TROLEANDOMYCIN</scope>
    <source>
        <strain>ATCC 13939 / DSM 20539 / JCM 16871 / CCUG 27074 / LMG 4051 / NBRC 15346 / NCIMB 9279 / VKM B-1422 / R1</strain>
    </source>
</reference>
<reference key="7">
    <citation type="journal article" date="2004" name="BMC Biol.">
        <title>Alterations at the peptidyl transferase centre of the ribosome induced by the synergistic action of the streptogramins dalfopristin and quinupristin.</title>
        <authorList>
            <person name="Harms J.M."/>
            <person name="Schluenzen F."/>
            <person name="Fucini P."/>
            <person name="Bartels H."/>
            <person name="Yonath A."/>
        </authorList>
    </citation>
    <scope>X-RAY CRYSTALLOGRAPHY (3.4 ANGSTROMS) OF THE 50S SUBUNIT IN COMPLEX WITH THE STREPTOGRAMINS QUINUPRISTIN AND DALFOPRISTIN</scope>
    <source>
        <strain>ATCC 13939 / DSM 20539 / JCM 16871 / CCUG 27074 / LMG 4051 / NBRC 15346 / NCIMB 9279 / VKM B-1422 / R1</strain>
    </source>
</reference>
<reference key="8">
    <citation type="journal article" date="2004" name="Mol. Microbiol.">
        <title>Inhibition of peptide bond formation by pleuromutilins: the structure of the 50S ribosomal subunit from Deinococcus radiodurans in complex with tiamulin.</title>
        <authorList>
            <person name="Schluenzen F."/>
            <person name="Pyetan E."/>
            <person name="Fucini P."/>
            <person name="Yonath A."/>
            <person name="Harms J.M."/>
        </authorList>
    </citation>
    <scope>X-RAY CRYSTALLOGRAPHY (3.5 ANGSTROMS) OF THE 50S SUBUNIT IN COMPLEX WITH TIAMULIN</scope>
    <source>
        <strain>ATCC 13939 / DSM 20539 / JCM 16871 / CCUG 27074 / LMG 4051 / NBRC 15346 / NCIMB 9279 / VKM B-1422 / R1</strain>
    </source>
</reference>
<accession>Q9RSW7</accession>
<feature type="chain" id="PRO_0000177153" description="Large ribosomal subunit protein bL20">
    <location>
        <begin position="1"/>
        <end position="118"/>
    </location>
</feature>
<feature type="helix" evidence="8">
    <location>
        <begin position="9"/>
        <end position="20"/>
    </location>
</feature>
<feature type="turn" evidence="8">
    <location>
        <begin position="21"/>
        <end position="23"/>
    </location>
</feature>
<feature type="helix" evidence="8">
    <location>
        <begin position="26"/>
        <end position="29"/>
    </location>
</feature>
<feature type="helix" evidence="8">
    <location>
        <begin position="32"/>
        <end position="71"/>
    </location>
</feature>
<feature type="helix" evidence="8">
    <location>
        <begin position="76"/>
        <end position="85"/>
    </location>
</feature>
<feature type="helix" evidence="8">
    <location>
        <begin position="92"/>
        <end position="101"/>
    </location>
</feature>
<feature type="helix" evidence="8">
    <location>
        <begin position="103"/>
        <end position="117"/>
    </location>
</feature>
<organism>
    <name type="scientific">Deinococcus radiodurans (strain ATCC 13939 / DSM 20539 / JCM 16871 / CCUG 27074 / LMG 4051 / NBRC 15346 / NCIMB 9279 / VKM B-1422 / R1)</name>
    <dbReference type="NCBI Taxonomy" id="243230"/>
    <lineage>
        <taxon>Bacteria</taxon>
        <taxon>Thermotogati</taxon>
        <taxon>Deinococcota</taxon>
        <taxon>Deinococci</taxon>
        <taxon>Deinococcales</taxon>
        <taxon>Deinococcaceae</taxon>
        <taxon>Deinococcus</taxon>
    </lineage>
</organism>
<evidence type="ECO:0000269" key="1">
    <source>
    </source>
</evidence>
<evidence type="ECO:0000269" key="2">
    <source>
    </source>
</evidence>
<evidence type="ECO:0000269" key="3">
    <source>
    </source>
</evidence>
<evidence type="ECO:0000269" key="4">
    <source>
    </source>
</evidence>
<evidence type="ECO:0000269" key="5">
    <source>
    </source>
</evidence>
<evidence type="ECO:0000269" key="6">
    <source>
    </source>
</evidence>
<evidence type="ECO:0000305" key="7"/>
<evidence type="ECO:0007829" key="8">
    <source>
        <dbReference type="PDB" id="5DM6"/>
    </source>
</evidence>
<protein>
    <recommendedName>
        <fullName evidence="7">Large ribosomal subunit protein bL20</fullName>
    </recommendedName>
    <alternativeName>
        <fullName>50S ribosomal protein L20</fullName>
    </alternativeName>
</protein>
<name>RL20_DEIRA</name>
<sequence length="118" mass="13957">MPRAKTGIVRRRRHKKVLKRAKGFWGSRSKQYRNAFQTLLNAATYEYRDRRNKKRDFRRLWIQRINAGARLHGMNYSTFINGLKRANIDLNRKVLADIAAREPEAFKALVDASRNARQ</sequence>
<proteinExistence type="evidence at protein level"/>